<name>RNZ_STAS1</name>
<keyword id="KW-0255">Endonuclease</keyword>
<keyword id="KW-0378">Hydrolase</keyword>
<keyword id="KW-0479">Metal-binding</keyword>
<keyword id="KW-0540">Nuclease</keyword>
<keyword id="KW-1185">Reference proteome</keyword>
<keyword id="KW-0819">tRNA processing</keyword>
<keyword id="KW-0862">Zinc</keyword>
<accession>Q49XV1</accession>
<dbReference type="EC" id="3.1.26.11" evidence="1"/>
<dbReference type="EMBL" id="AP008934">
    <property type="protein sequence ID" value="BAE18394.1"/>
    <property type="molecule type" value="Genomic_DNA"/>
</dbReference>
<dbReference type="RefSeq" id="WP_002483224.1">
    <property type="nucleotide sequence ID" value="NZ_MTGA01000038.1"/>
</dbReference>
<dbReference type="SMR" id="Q49XV1"/>
<dbReference type="GeneID" id="66867479"/>
<dbReference type="KEGG" id="ssp:SSP1249"/>
<dbReference type="eggNOG" id="COG1234">
    <property type="taxonomic scope" value="Bacteria"/>
</dbReference>
<dbReference type="HOGENOM" id="CLU_031317_2_0_9"/>
<dbReference type="OrthoDB" id="9800940at2"/>
<dbReference type="Proteomes" id="UP000006371">
    <property type="component" value="Chromosome"/>
</dbReference>
<dbReference type="GO" id="GO:0042781">
    <property type="term" value="F:3'-tRNA processing endoribonuclease activity"/>
    <property type="evidence" value="ECO:0007669"/>
    <property type="project" value="UniProtKB-UniRule"/>
</dbReference>
<dbReference type="GO" id="GO:0008270">
    <property type="term" value="F:zinc ion binding"/>
    <property type="evidence" value="ECO:0007669"/>
    <property type="project" value="UniProtKB-UniRule"/>
</dbReference>
<dbReference type="CDD" id="cd07717">
    <property type="entry name" value="RNaseZ_ZiPD-like_MBL-fold"/>
    <property type="match status" value="1"/>
</dbReference>
<dbReference type="FunFam" id="3.60.15.10:FF:000002">
    <property type="entry name" value="Ribonuclease Z"/>
    <property type="match status" value="1"/>
</dbReference>
<dbReference type="Gene3D" id="3.60.15.10">
    <property type="entry name" value="Ribonuclease Z/Hydroxyacylglutathione hydrolase-like"/>
    <property type="match status" value="1"/>
</dbReference>
<dbReference type="HAMAP" id="MF_01818">
    <property type="entry name" value="RNase_Z_BN"/>
    <property type="match status" value="1"/>
</dbReference>
<dbReference type="InterPro" id="IPR036866">
    <property type="entry name" value="RibonucZ/Hydroxyglut_hydro"/>
</dbReference>
<dbReference type="InterPro" id="IPR013471">
    <property type="entry name" value="RNase_Z/BN"/>
</dbReference>
<dbReference type="InterPro" id="IPR027794">
    <property type="entry name" value="tRNase_Z_dom"/>
</dbReference>
<dbReference type="NCBIfam" id="TIGR02651">
    <property type="entry name" value="RNase_Z"/>
    <property type="match status" value="1"/>
</dbReference>
<dbReference type="PANTHER" id="PTHR46018">
    <property type="entry name" value="ZINC PHOSPHODIESTERASE ELAC PROTEIN 1"/>
    <property type="match status" value="1"/>
</dbReference>
<dbReference type="PANTHER" id="PTHR46018:SF2">
    <property type="entry name" value="ZINC PHOSPHODIESTERASE ELAC PROTEIN 1"/>
    <property type="match status" value="1"/>
</dbReference>
<dbReference type="Pfam" id="PF13691">
    <property type="entry name" value="Lactamase_B_4"/>
    <property type="match status" value="1"/>
</dbReference>
<dbReference type="SUPFAM" id="SSF56281">
    <property type="entry name" value="Metallo-hydrolase/oxidoreductase"/>
    <property type="match status" value="1"/>
</dbReference>
<comment type="function">
    <text evidence="1">Zinc phosphodiesterase, which displays some tRNA 3'-processing endonuclease activity. Probably involved in tRNA maturation, by removing a 3'-trailer from precursor tRNA.</text>
</comment>
<comment type="catalytic activity">
    <reaction evidence="1">
        <text>Endonucleolytic cleavage of RNA, removing extra 3' nucleotides from tRNA precursor, generating 3' termini of tRNAs. A 3'-hydroxy group is left at the tRNA terminus and a 5'-phosphoryl group is left at the trailer molecule.</text>
        <dbReference type="EC" id="3.1.26.11"/>
    </reaction>
</comment>
<comment type="cofactor">
    <cofactor evidence="1">
        <name>Zn(2+)</name>
        <dbReference type="ChEBI" id="CHEBI:29105"/>
    </cofactor>
    <text evidence="1">Binds 2 Zn(2+) ions.</text>
</comment>
<comment type="subunit">
    <text evidence="1">Homodimer.</text>
</comment>
<comment type="similarity">
    <text evidence="1">Belongs to the RNase Z family.</text>
</comment>
<organism>
    <name type="scientific">Staphylococcus saprophyticus subsp. saprophyticus (strain ATCC 15305 / DSM 20229 / NCIMB 8711 / NCTC 7292 / S-41)</name>
    <dbReference type="NCBI Taxonomy" id="342451"/>
    <lineage>
        <taxon>Bacteria</taxon>
        <taxon>Bacillati</taxon>
        <taxon>Bacillota</taxon>
        <taxon>Bacilli</taxon>
        <taxon>Bacillales</taxon>
        <taxon>Staphylococcaceae</taxon>
        <taxon>Staphylococcus</taxon>
    </lineage>
</organism>
<reference key="1">
    <citation type="journal article" date="2005" name="Proc. Natl. Acad. Sci. U.S.A.">
        <title>Whole genome sequence of Staphylococcus saprophyticus reveals the pathogenesis of uncomplicated urinary tract infection.</title>
        <authorList>
            <person name="Kuroda M."/>
            <person name="Yamashita A."/>
            <person name="Hirakawa H."/>
            <person name="Kumano M."/>
            <person name="Morikawa K."/>
            <person name="Higashide M."/>
            <person name="Maruyama A."/>
            <person name="Inose Y."/>
            <person name="Matoba K."/>
            <person name="Toh H."/>
            <person name="Kuhara S."/>
            <person name="Hattori M."/>
            <person name="Ohta T."/>
        </authorList>
    </citation>
    <scope>NUCLEOTIDE SEQUENCE [LARGE SCALE GENOMIC DNA]</scope>
    <source>
        <strain>ATCC 15305 / DSM 20229 / NCIMB 8711 / NCTC 7292 / S-41</strain>
    </source>
</reference>
<sequence>MEITFFGTSAGLPTKERNTQAIALNLEPYSNNIWLFDVGEGTQHQILHHSIKLGKVDHIFITHMHGDHIFGLPGLLTSRSFQGGEGKPLTLIGPKGIKAYIETTLRLSESKLNYPITYIEIENHLSYQNNGFNVEAHMLNHGIPSFGYRIEAPYTSGKIDVSALKEIGLEPGPKYQDVKNNETFEYNGIIYNSKDFKGDAVKGPVIAIFGDTMPCQNEEIIADHANVMVHESTYIEGDKSLANNYHHSHIEDVFTLIENAHVDYSLITHMSNRYTIEEVETISKSLKSLPTTPPFKFVKDFDSWSF</sequence>
<proteinExistence type="inferred from homology"/>
<protein>
    <recommendedName>
        <fullName evidence="1">Ribonuclease Z</fullName>
        <shortName evidence="1">RNase Z</shortName>
        <ecNumber evidence="1">3.1.26.11</ecNumber>
    </recommendedName>
    <alternativeName>
        <fullName evidence="1">tRNA 3 endonuclease</fullName>
    </alternativeName>
    <alternativeName>
        <fullName evidence="1">tRNase Z</fullName>
    </alternativeName>
</protein>
<evidence type="ECO:0000255" key="1">
    <source>
        <dbReference type="HAMAP-Rule" id="MF_01818"/>
    </source>
</evidence>
<gene>
    <name evidence="1" type="primary">rnz</name>
    <name type="ordered locus">SSP1249</name>
</gene>
<feature type="chain" id="PRO_1000070332" description="Ribonuclease Z">
    <location>
        <begin position="1"/>
        <end position="306"/>
    </location>
</feature>
<feature type="active site" description="Proton acceptor" evidence="1">
    <location>
        <position position="67"/>
    </location>
</feature>
<feature type="binding site" evidence="1">
    <location>
        <position position="63"/>
    </location>
    <ligand>
        <name>Zn(2+)</name>
        <dbReference type="ChEBI" id="CHEBI:29105"/>
        <label>1</label>
        <note>catalytic</note>
    </ligand>
</feature>
<feature type="binding site" evidence="1">
    <location>
        <position position="65"/>
    </location>
    <ligand>
        <name>Zn(2+)</name>
        <dbReference type="ChEBI" id="CHEBI:29105"/>
        <label>1</label>
        <note>catalytic</note>
    </ligand>
</feature>
<feature type="binding site" evidence="1">
    <location>
        <position position="67"/>
    </location>
    <ligand>
        <name>Zn(2+)</name>
        <dbReference type="ChEBI" id="CHEBI:29105"/>
        <label>2</label>
        <note>catalytic</note>
    </ligand>
</feature>
<feature type="binding site" evidence="1">
    <location>
        <position position="68"/>
    </location>
    <ligand>
        <name>Zn(2+)</name>
        <dbReference type="ChEBI" id="CHEBI:29105"/>
        <label>2</label>
        <note>catalytic</note>
    </ligand>
</feature>
<feature type="binding site" evidence="1">
    <location>
        <position position="141"/>
    </location>
    <ligand>
        <name>Zn(2+)</name>
        <dbReference type="ChEBI" id="CHEBI:29105"/>
        <label>1</label>
        <note>catalytic</note>
    </ligand>
</feature>
<feature type="binding site" evidence="1">
    <location>
        <position position="211"/>
    </location>
    <ligand>
        <name>Zn(2+)</name>
        <dbReference type="ChEBI" id="CHEBI:29105"/>
        <label>1</label>
        <note>catalytic</note>
    </ligand>
</feature>
<feature type="binding site" evidence="1">
    <location>
        <position position="211"/>
    </location>
    <ligand>
        <name>Zn(2+)</name>
        <dbReference type="ChEBI" id="CHEBI:29105"/>
        <label>2</label>
        <note>catalytic</note>
    </ligand>
</feature>
<feature type="binding site" evidence="1">
    <location>
        <position position="269"/>
    </location>
    <ligand>
        <name>Zn(2+)</name>
        <dbReference type="ChEBI" id="CHEBI:29105"/>
        <label>2</label>
        <note>catalytic</note>
    </ligand>
</feature>